<reference key="1">
    <citation type="journal article" date="1983" name="J. Biol. Chem.">
        <title>Structure of the metJBLF cluster in Escherichia coli K12. Sequence of the metB structural gene and of the 5'- and 3'-flanking regions of the metBL operon.</title>
        <authorList>
            <person name="Duchange N."/>
            <person name="Zakin M.M."/>
            <person name="Ferrara P."/>
            <person name="Saint-Girons I."/>
            <person name="Park I."/>
            <person name="Tran S.V."/>
            <person name="Py M.-C."/>
            <person name="Cohen G.N."/>
        </authorList>
    </citation>
    <scope>NUCLEOTIDE SEQUENCE [GENOMIC DNA]</scope>
    <source>
        <strain>K12</strain>
    </source>
</reference>
<reference key="2">
    <citation type="journal article" date="1993" name="Nucleic Acids Res.">
        <title>Analysis of the Escherichia coli genome. III. DNA sequence of the region from 87.2 to 89.2 minutes.</title>
        <authorList>
            <person name="Plunkett G. III"/>
            <person name="Burland V."/>
            <person name="Daniels D.L."/>
            <person name="Blattner F.R."/>
        </authorList>
    </citation>
    <scope>NUCLEOTIDE SEQUENCE [LARGE SCALE GENOMIC DNA]</scope>
    <source>
        <strain>K12 / MG1655 / ATCC 47076</strain>
    </source>
</reference>
<reference key="3">
    <citation type="journal article" date="1997" name="Science">
        <title>The complete genome sequence of Escherichia coli K-12.</title>
        <authorList>
            <person name="Blattner F.R."/>
            <person name="Plunkett G. III"/>
            <person name="Bloch C.A."/>
            <person name="Perna N.T."/>
            <person name="Burland V."/>
            <person name="Riley M."/>
            <person name="Collado-Vides J."/>
            <person name="Glasner J.D."/>
            <person name="Rode C.K."/>
            <person name="Mayhew G.F."/>
            <person name="Gregor J."/>
            <person name="Davis N.W."/>
            <person name="Kirkpatrick H.A."/>
            <person name="Goeden M.A."/>
            <person name="Rose D.J."/>
            <person name="Mau B."/>
            <person name="Shao Y."/>
        </authorList>
    </citation>
    <scope>NUCLEOTIDE SEQUENCE [LARGE SCALE GENOMIC DNA]</scope>
    <source>
        <strain>K12 / MG1655 / ATCC 47076</strain>
    </source>
</reference>
<reference key="4">
    <citation type="journal article" date="2006" name="Mol. Syst. Biol.">
        <title>Highly accurate genome sequences of Escherichia coli K-12 strains MG1655 and W3110.</title>
        <authorList>
            <person name="Hayashi K."/>
            <person name="Morooka N."/>
            <person name="Yamamoto Y."/>
            <person name="Fujita K."/>
            <person name="Isono K."/>
            <person name="Choi S."/>
            <person name="Ohtsubo E."/>
            <person name="Baba T."/>
            <person name="Wanner B.L."/>
            <person name="Mori H."/>
            <person name="Horiuchi T."/>
        </authorList>
    </citation>
    <scope>NUCLEOTIDE SEQUENCE [LARGE SCALE GENOMIC DNA]</scope>
    <source>
        <strain>K12 / W3110 / ATCC 27325 / DSM 5911</strain>
    </source>
</reference>
<reference key="5">
    <citation type="journal article" date="1987" name="Biochem. Biophys. Res. Commun.">
        <title>Pyridoxal 5'phosphate binding site of Escherichia coli beta cystathionase and cystathionine gamma synthase comparison of their sequences.</title>
        <authorList>
            <person name="Martel A."/>
            <person name="Bouthier de la Tour C."/>
            <person name="Le Goffic F."/>
        </authorList>
    </citation>
    <scope>PROTEIN SEQUENCE OF 182-209</scope>
</reference>
<reference key="6">
    <citation type="journal article" date="1990" name="Biochemistry">
        <title>Purification and properties of cystathionine gamma-synthase from overproducing strains of Escherichia coli.</title>
        <authorList>
            <person name="Holbrook E.L."/>
            <person name="Greene R.C."/>
            <person name="Krueger J.H."/>
        </authorList>
    </citation>
    <scope>FUNCTION</scope>
    <scope>CATALYTIC ACTIVITY</scope>
    <scope>COFACTOR</scope>
    <scope>BIOPHYSICOCHEMICAL PROPERTIES</scope>
    <scope>SUBUNIT</scope>
</reference>
<reference key="7">
    <citation type="journal article" date="1997" name="Electrophoresis">
        <title>Escherichia coli proteome analysis using the gene-protein database.</title>
        <authorList>
            <person name="VanBogelen R.A."/>
            <person name="Abshire K.Z."/>
            <person name="Moldover B."/>
            <person name="Olson E.R."/>
            <person name="Neidhardt F.C."/>
        </authorList>
    </citation>
    <scope>IDENTIFICATION BY 2D-GEL</scope>
</reference>
<reference key="8">
    <citation type="journal article" date="1998" name="EMBO J.">
        <title>Crystal structure of Escherichia coli cystathionine gamma-synthase at 1.5-A resolution.</title>
        <authorList>
            <person name="Clausen T."/>
            <person name="Huber R."/>
            <person name="Prade L."/>
            <person name="Wahl M.C."/>
            <person name="Messerschmidt A."/>
        </authorList>
    </citation>
    <scope>X-RAY CRYSTALLOGRAPHY (1.5 ANGSTROMS)</scope>
    <scope>SUBUNIT</scope>
    <scope>PYRIDOXAL PHOSPHATE AT LYS-198</scope>
</reference>
<comment type="function">
    <text evidence="1">Catalyzes the formation of L-cystathionine from O-succinyl-L-homoserine (OSHS) and L-cysteine, via a gamma-replacement reaction. In the absence of thiol, catalyzes gamma-elimination to form 2-oxobutanoate, succinate and ammonia.</text>
</comment>
<comment type="catalytic activity">
    <reaction evidence="1">
        <text>O-succinyl-L-homoserine + L-cysteine = L,L-cystathionine + succinate + H(+)</text>
        <dbReference type="Rhea" id="RHEA:20397"/>
        <dbReference type="ChEBI" id="CHEBI:15378"/>
        <dbReference type="ChEBI" id="CHEBI:30031"/>
        <dbReference type="ChEBI" id="CHEBI:35235"/>
        <dbReference type="ChEBI" id="CHEBI:57661"/>
        <dbReference type="ChEBI" id="CHEBI:58161"/>
        <dbReference type="EC" id="2.5.1.48"/>
    </reaction>
</comment>
<comment type="cofactor">
    <cofactor evidence="1">
        <name>pyridoxal 5'-phosphate</name>
        <dbReference type="ChEBI" id="CHEBI:597326"/>
    </cofactor>
    <text evidence="1">Binds 1 pyridoxal phosphate per subunit.</text>
</comment>
<comment type="biophysicochemical properties">
    <kinetics>
        <KM evidence="1">0.33 mM for O-succinyl-L-homoserine (at pH 8.2 and 25 degrees Celsius, when assaying the gamma-elimination reaction)</KM>
        <KM evidence="1">1 mM for O-succinyl-L-homoserine (at pH 8.2 and 25 degrees Celsius, when assaying the gamma-replacement reaction)</KM>
        <KM evidence="1">0.05 mM for L-cysteine (at pH 8.2 and 25 degrees Celsius, when assaying the gamma-replacement reaction)</KM>
        <text>kcat are 700 min(-1) and 460 min(-1) for the gamma-replacement and gamma-elimination reaction, respectively.</text>
    </kinetics>
    <phDependence>
        <text evidence="1">Optimum pH is 7.8 for the gamma-replacement reaction.</text>
    </phDependence>
</comment>
<comment type="pathway">
    <text>Amino-acid biosynthesis; L-methionine biosynthesis via de novo pathway; L-cystathionine from O-succinyl-L-homoserine: step 1/1.</text>
</comment>
<comment type="subunit">
    <text evidence="1 3">Homotetramer.</text>
</comment>
<comment type="subcellular location">
    <subcellularLocation>
        <location>Cytoplasm</location>
    </subcellularLocation>
</comment>
<comment type="similarity">
    <text evidence="4">Belongs to the trans-sulfuration enzymes family.</text>
</comment>
<keyword id="KW-0002">3D-structure</keyword>
<keyword id="KW-0028">Amino-acid biosynthesis</keyword>
<keyword id="KW-0963">Cytoplasm</keyword>
<keyword id="KW-0903">Direct protein sequencing</keyword>
<keyword id="KW-0486">Methionine biosynthesis</keyword>
<keyword id="KW-0663">Pyridoxal phosphate</keyword>
<keyword id="KW-1185">Reference proteome</keyword>
<keyword id="KW-0808">Transferase</keyword>
<protein>
    <recommendedName>
        <fullName>Cystathionine gamma-synthase</fullName>
        <shortName>CGS</shortName>
        <ecNumber>2.5.1.48</ecNumber>
    </recommendedName>
    <alternativeName>
        <fullName>O-succinylhomoserine (thiol)-lyase</fullName>
    </alternativeName>
</protein>
<name>METB_ECOLI</name>
<organism>
    <name type="scientific">Escherichia coli (strain K12)</name>
    <dbReference type="NCBI Taxonomy" id="83333"/>
    <lineage>
        <taxon>Bacteria</taxon>
        <taxon>Pseudomonadati</taxon>
        <taxon>Pseudomonadota</taxon>
        <taxon>Gammaproteobacteria</taxon>
        <taxon>Enterobacterales</taxon>
        <taxon>Enterobacteriaceae</taxon>
        <taxon>Escherichia</taxon>
    </lineage>
</organism>
<accession>P00935</accession>
<accession>Q2M8N5</accession>
<feature type="chain" id="PRO_0000114756" description="Cystathionine gamma-synthase">
    <location>
        <begin position="1"/>
        <end position="386"/>
    </location>
</feature>
<feature type="modified residue" description="N6-(pyridoxal phosphate)lysine" evidence="2">
    <location>
        <position position="198"/>
    </location>
</feature>
<feature type="helix" evidence="5">
    <location>
        <begin position="5"/>
        <end position="11"/>
    </location>
</feature>
<feature type="turn" evidence="5">
    <location>
        <begin position="12"/>
        <end position="15"/>
    </location>
</feature>
<feature type="turn" evidence="5">
    <location>
        <begin position="18"/>
        <end position="20"/>
    </location>
</feature>
<feature type="strand" evidence="5">
    <location>
        <begin position="22"/>
        <end position="24"/>
    </location>
</feature>
<feature type="strand" evidence="5">
    <location>
        <begin position="31"/>
        <end position="33"/>
    </location>
</feature>
<feature type="turn" evidence="5">
    <location>
        <begin position="47"/>
        <end position="49"/>
    </location>
</feature>
<feature type="helix" evidence="5">
    <location>
        <begin position="52"/>
        <end position="65"/>
    </location>
</feature>
<feature type="strand" evidence="5">
    <location>
        <begin position="68"/>
        <end position="75"/>
    </location>
</feature>
<feature type="helix" evidence="5">
    <location>
        <begin position="76"/>
        <end position="87"/>
    </location>
</feature>
<feature type="strand" evidence="5">
    <location>
        <begin position="93"/>
        <end position="97"/>
    </location>
</feature>
<feature type="helix" evidence="5">
    <location>
        <begin position="102"/>
        <end position="112"/>
    </location>
</feature>
<feature type="turn" evidence="5">
    <location>
        <begin position="113"/>
        <end position="115"/>
    </location>
</feature>
<feature type="strand" evidence="5">
    <location>
        <begin position="118"/>
        <end position="122"/>
    </location>
</feature>
<feature type="helix" evidence="5">
    <location>
        <begin position="127"/>
        <end position="135"/>
    </location>
</feature>
<feature type="strand" evidence="5">
    <location>
        <begin position="139"/>
        <end position="144"/>
    </location>
</feature>
<feature type="turn" evidence="5">
    <location>
        <begin position="148"/>
        <end position="150"/>
    </location>
</feature>
<feature type="helix" evidence="5">
    <location>
        <begin position="156"/>
        <end position="165"/>
    </location>
</feature>
<feature type="strand" evidence="5">
    <location>
        <begin position="169"/>
        <end position="173"/>
    </location>
</feature>
<feature type="turn" evidence="5">
    <location>
        <begin position="175"/>
        <end position="177"/>
    </location>
</feature>
<feature type="turn" evidence="5">
    <location>
        <begin position="179"/>
        <end position="181"/>
    </location>
</feature>
<feature type="helix" evidence="5">
    <location>
        <begin position="184"/>
        <end position="187"/>
    </location>
</feature>
<feature type="strand" evidence="5">
    <location>
        <begin position="190"/>
        <end position="195"/>
    </location>
</feature>
<feature type="strand" evidence="5">
    <location>
        <begin position="209"/>
        <end position="215"/>
    </location>
</feature>
<feature type="helix" evidence="5">
    <location>
        <begin position="216"/>
        <end position="228"/>
    </location>
</feature>
<feature type="helix" evidence="5">
    <location>
        <begin position="235"/>
        <end position="245"/>
    </location>
</feature>
<feature type="helix" evidence="5">
    <location>
        <begin position="248"/>
        <end position="266"/>
    </location>
</feature>
<feature type="strand" evidence="5">
    <location>
        <begin position="272"/>
        <end position="276"/>
    </location>
</feature>
<feature type="helix" evidence="5">
    <location>
        <begin position="286"/>
        <end position="292"/>
    </location>
</feature>
<feature type="strand" evidence="5">
    <location>
        <begin position="298"/>
        <end position="306"/>
    </location>
</feature>
<feature type="helix" evidence="5">
    <location>
        <begin position="308"/>
        <end position="316"/>
    </location>
</feature>
<feature type="strand" evidence="5">
    <location>
        <begin position="319"/>
        <end position="325"/>
    </location>
</feature>
<feature type="strand" evidence="5">
    <location>
        <begin position="329"/>
        <end position="331"/>
    </location>
</feature>
<feature type="strand" evidence="5">
    <location>
        <begin position="333"/>
        <end position="336"/>
    </location>
</feature>
<feature type="helix" evidence="5">
    <location>
        <begin position="337"/>
        <end position="339"/>
    </location>
</feature>
<feature type="turn" evidence="5">
    <location>
        <begin position="340"/>
        <end position="344"/>
    </location>
</feature>
<feature type="helix" evidence="5">
    <location>
        <begin position="347"/>
        <end position="352"/>
    </location>
</feature>
<feature type="strand" evidence="5">
    <location>
        <begin position="359"/>
        <end position="363"/>
    </location>
</feature>
<feature type="helix" evidence="5">
    <location>
        <begin position="369"/>
        <end position="383"/>
    </location>
</feature>
<sequence>MTRKQATIAVRSGLNDDEQYGCVVPPIHLSSTYNFTGFNEPRAHDYSRRGNPTRDVVQRALAELEGGAGAVLTNTGMSAIHLVTTVFLKPGDLLVAPHDCYGGSYRLFDSLAKRGCYRVLFVDQGDEQALRAALAEKPKLVLVESPSNPLLRVVDIAKICHLAREVGAVSVVDNTFLSPALQNPLALGADLVLHSCTKYLNGHSDVVAGVVIAKDPDVVTELAWWANNIGVTGGAFDSYLLLRGLRTLVPRMELAQRNAQAIVKYLQTQPLVKKLYHPSLPENQGHEIAARQQKGFGAMLSFELDGDEQTLRRFLGGLSLFTLAESLGGVESLISHAATMTHAGMAPEARAAAGISETLLRISTGIEDGEDLIADLENGFRAANKG</sequence>
<proteinExistence type="evidence at protein level"/>
<gene>
    <name type="primary">metB</name>
    <name type="ordered locus">b3939</name>
    <name type="ordered locus">JW3910</name>
</gene>
<dbReference type="EC" id="2.5.1.48"/>
<dbReference type="EMBL" id="AH000886">
    <property type="protein sequence ID" value="AAA24167.1"/>
    <property type="molecule type" value="Genomic_DNA"/>
</dbReference>
<dbReference type="EMBL" id="L19201">
    <property type="protein sequence ID" value="AAB03071.1"/>
    <property type="molecule type" value="Genomic_DNA"/>
</dbReference>
<dbReference type="EMBL" id="U00096">
    <property type="protein sequence ID" value="AAC76921.1"/>
    <property type="molecule type" value="Genomic_DNA"/>
</dbReference>
<dbReference type="EMBL" id="AP009048">
    <property type="protein sequence ID" value="BAE77371.1"/>
    <property type="molecule type" value="Genomic_DNA"/>
</dbReference>
<dbReference type="PIR" id="A01158">
    <property type="entry name" value="SYECCG"/>
</dbReference>
<dbReference type="RefSeq" id="NP_418374.1">
    <property type="nucleotide sequence ID" value="NC_000913.3"/>
</dbReference>
<dbReference type="RefSeq" id="WP_001295694.1">
    <property type="nucleotide sequence ID" value="NZ_SSZK01000014.1"/>
</dbReference>
<dbReference type="PDB" id="1CS1">
    <property type="method" value="X-ray"/>
    <property type="resolution" value="1.50 A"/>
    <property type="chains" value="A/B/C/D=1-386"/>
</dbReference>
<dbReference type="PDBsum" id="1CS1"/>
<dbReference type="SMR" id="P00935"/>
<dbReference type="BioGRID" id="4261102">
    <property type="interactions" value="20"/>
</dbReference>
<dbReference type="BioGRID" id="852731">
    <property type="interactions" value="1"/>
</dbReference>
<dbReference type="DIP" id="DIP-10192N"/>
<dbReference type="FunCoup" id="P00935">
    <property type="interactions" value="779"/>
</dbReference>
<dbReference type="IntAct" id="P00935">
    <property type="interactions" value="1"/>
</dbReference>
<dbReference type="STRING" id="511145.b3939"/>
<dbReference type="DrugBank" id="DB04083">
    <property type="generic name" value="N(6)-(pyridoxal phosphate)-L-lysine"/>
</dbReference>
<dbReference type="jPOST" id="P00935"/>
<dbReference type="PaxDb" id="511145-b3939"/>
<dbReference type="EnsemblBacteria" id="AAC76921">
    <property type="protein sequence ID" value="AAC76921"/>
    <property type="gene ID" value="b3939"/>
</dbReference>
<dbReference type="GeneID" id="948434"/>
<dbReference type="KEGG" id="ecj:JW3910"/>
<dbReference type="KEGG" id="eco:b3939"/>
<dbReference type="KEGG" id="ecoc:C3026_21285"/>
<dbReference type="PATRIC" id="fig|1411691.4.peg.2766"/>
<dbReference type="EchoBASE" id="EB0577"/>
<dbReference type="eggNOG" id="COG0626">
    <property type="taxonomic scope" value="Bacteria"/>
</dbReference>
<dbReference type="HOGENOM" id="CLU_018986_2_0_6"/>
<dbReference type="InParanoid" id="P00935"/>
<dbReference type="OMA" id="NCIGATG"/>
<dbReference type="OrthoDB" id="9805807at2"/>
<dbReference type="PhylomeDB" id="P00935"/>
<dbReference type="BioCyc" id="EcoCyc:O-SUCCHOMOSERLYASE-MONOMER"/>
<dbReference type="BioCyc" id="MetaCyc:O-SUCCHOMOSERLYASE-MONOMER"/>
<dbReference type="BRENDA" id="2.5.1.48">
    <property type="organism ID" value="2026"/>
</dbReference>
<dbReference type="SABIO-RK" id="P00935"/>
<dbReference type="UniPathway" id="UPA00051">
    <property type="reaction ID" value="UER00077"/>
</dbReference>
<dbReference type="EvolutionaryTrace" id="P00935"/>
<dbReference type="PRO" id="PR:P00935"/>
<dbReference type="Proteomes" id="UP000000625">
    <property type="component" value="Chromosome"/>
</dbReference>
<dbReference type="GO" id="GO:0005737">
    <property type="term" value="C:cytoplasm"/>
    <property type="evidence" value="ECO:0000318"/>
    <property type="project" value="GO_Central"/>
</dbReference>
<dbReference type="GO" id="GO:0004123">
    <property type="term" value="F:cystathionine gamma-lyase activity"/>
    <property type="evidence" value="ECO:0000318"/>
    <property type="project" value="GO_Central"/>
</dbReference>
<dbReference type="GO" id="GO:0003962">
    <property type="term" value="F:cystathionine gamma-synthase activity"/>
    <property type="evidence" value="ECO:0000314"/>
    <property type="project" value="EcoCyc"/>
</dbReference>
<dbReference type="GO" id="GO:0030170">
    <property type="term" value="F:pyridoxal phosphate binding"/>
    <property type="evidence" value="ECO:0000314"/>
    <property type="project" value="EcoCyc"/>
</dbReference>
<dbReference type="GO" id="GO:0019343">
    <property type="term" value="P:cysteine biosynthetic process via cystathionine"/>
    <property type="evidence" value="ECO:0000318"/>
    <property type="project" value="GO_Central"/>
</dbReference>
<dbReference type="GO" id="GO:0009086">
    <property type="term" value="P:methionine biosynthetic process"/>
    <property type="evidence" value="ECO:0000315"/>
    <property type="project" value="EcoCyc"/>
</dbReference>
<dbReference type="GO" id="GO:0019346">
    <property type="term" value="P:transsulfuration"/>
    <property type="evidence" value="ECO:0000318"/>
    <property type="project" value="GO_Central"/>
</dbReference>
<dbReference type="CDD" id="cd00614">
    <property type="entry name" value="CGS_like"/>
    <property type="match status" value="1"/>
</dbReference>
<dbReference type="FunFam" id="3.40.640.10:FF:000038">
    <property type="entry name" value="Cystathionine gamma-synthase"/>
    <property type="match status" value="1"/>
</dbReference>
<dbReference type="FunFam" id="3.90.1150.10:FF:000008">
    <property type="entry name" value="Cystathionine gamma-synthase"/>
    <property type="match status" value="1"/>
</dbReference>
<dbReference type="Gene3D" id="3.90.1150.10">
    <property type="entry name" value="Aspartate Aminotransferase, domain 1"/>
    <property type="match status" value="1"/>
</dbReference>
<dbReference type="Gene3D" id="3.40.640.10">
    <property type="entry name" value="Type I PLP-dependent aspartate aminotransferase-like (Major domain)"/>
    <property type="match status" value="1"/>
</dbReference>
<dbReference type="InterPro" id="IPR000277">
    <property type="entry name" value="Cys/Met-Metab_PyrdxlP-dep_enz"/>
</dbReference>
<dbReference type="InterPro" id="IPR054542">
    <property type="entry name" value="Cys_met_metab_PP"/>
</dbReference>
<dbReference type="InterPro" id="IPR011821">
    <property type="entry name" value="O_succ_thio_ly"/>
</dbReference>
<dbReference type="InterPro" id="IPR015424">
    <property type="entry name" value="PyrdxlP-dep_Trfase"/>
</dbReference>
<dbReference type="InterPro" id="IPR015421">
    <property type="entry name" value="PyrdxlP-dep_Trfase_major"/>
</dbReference>
<dbReference type="InterPro" id="IPR015422">
    <property type="entry name" value="PyrdxlP-dep_Trfase_small"/>
</dbReference>
<dbReference type="NCBIfam" id="TIGR02080">
    <property type="entry name" value="O_succ_thio_ly"/>
    <property type="match status" value="1"/>
</dbReference>
<dbReference type="NCBIfam" id="NF005961">
    <property type="entry name" value="PRK08045.1"/>
    <property type="match status" value="1"/>
</dbReference>
<dbReference type="PANTHER" id="PTHR11808:SF75">
    <property type="entry name" value="CYSTATHIONINE GAMMA-SYNTHASE"/>
    <property type="match status" value="1"/>
</dbReference>
<dbReference type="PANTHER" id="PTHR11808">
    <property type="entry name" value="TRANS-SULFURATION ENZYME FAMILY MEMBER"/>
    <property type="match status" value="1"/>
</dbReference>
<dbReference type="Pfam" id="PF01053">
    <property type="entry name" value="Cys_Met_Meta_PP"/>
    <property type="match status" value="1"/>
</dbReference>
<dbReference type="PIRSF" id="PIRSF001434">
    <property type="entry name" value="CGS"/>
    <property type="match status" value="1"/>
</dbReference>
<dbReference type="SUPFAM" id="SSF53383">
    <property type="entry name" value="PLP-dependent transferases"/>
    <property type="match status" value="1"/>
</dbReference>
<dbReference type="PROSITE" id="PS00868">
    <property type="entry name" value="CYS_MET_METAB_PP"/>
    <property type="match status" value="1"/>
</dbReference>
<evidence type="ECO:0000269" key="1">
    <source>
    </source>
</evidence>
<evidence type="ECO:0000269" key="2">
    <source>
    </source>
</evidence>
<evidence type="ECO:0000269" key="3">
    <source>
    </source>
</evidence>
<evidence type="ECO:0000305" key="4"/>
<evidence type="ECO:0007829" key="5">
    <source>
        <dbReference type="PDB" id="1CS1"/>
    </source>
</evidence>